<gene>
    <name type="ORF">CTHT_0071780</name>
</gene>
<accession>P0CT47</accession>
<dbReference type="EMBL" id="GL988047">
    <property type="status" value="NOT_ANNOTATED_CDS"/>
    <property type="molecule type" value="Genomic_DNA"/>
</dbReference>
<dbReference type="PDB" id="6RXT">
    <property type="method" value="EM"/>
    <property type="resolution" value="7.00 A"/>
    <property type="chains" value="UH=1-930"/>
</dbReference>
<dbReference type="PDB" id="6RXU">
    <property type="method" value="EM"/>
    <property type="resolution" value="3.50 A"/>
    <property type="chains" value="UH=1-930"/>
</dbReference>
<dbReference type="PDB" id="6RXV">
    <property type="method" value="EM"/>
    <property type="resolution" value="4.00 A"/>
    <property type="chains" value="UH=1-930"/>
</dbReference>
<dbReference type="PDB" id="6RXX">
    <property type="method" value="EM"/>
    <property type="resolution" value="7.10 A"/>
    <property type="chains" value="UH=1-930"/>
</dbReference>
<dbReference type="PDB" id="6RXY">
    <property type="method" value="EM"/>
    <property type="resolution" value="4.70 A"/>
    <property type="chains" value="UH=1-930"/>
</dbReference>
<dbReference type="PDB" id="6RXZ">
    <property type="method" value="EM"/>
    <property type="resolution" value="4.40 A"/>
    <property type="chains" value="UH=1-930"/>
</dbReference>
<dbReference type="PDBsum" id="6RXT"/>
<dbReference type="PDBsum" id="6RXU"/>
<dbReference type="PDBsum" id="6RXV"/>
<dbReference type="PDBsum" id="6RXX"/>
<dbReference type="PDBsum" id="6RXY"/>
<dbReference type="PDBsum" id="6RXZ"/>
<dbReference type="EMDB" id="EMD-10051"/>
<dbReference type="EMDB" id="EMD-10052"/>
<dbReference type="EMDB" id="EMD-10053"/>
<dbReference type="EMDB" id="EMD-10054"/>
<dbReference type="EMDB" id="EMD-10055"/>
<dbReference type="EMDB" id="EMD-10056"/>
<dbReference type="SMR" id="P0CT47"/>
<dbReference type="STRING" id="759272.P0CT47"/>
<dbReference type="Proteomes" id="UP000008066">
    <property type="component" value="Unassembled WGS sequence"/>
</dbReference>
<dbReference type="GO" id="GO:0005634">
    <property type="term" value="C:nucleus"/>
    <property type="evidence" value="ECO:0007669"/>
    <property type="project" value="UniProtKB-SubCell"/>
</dbReference>
<feature type="chain" id="PRO_0000425443" description="Uncharacterized protein CTHT_0071780">
    <location>
        <begin position="1"/>
        <end position="930"/>
    </location>
</feature>
<feature type="short sequence motif" description="Nuclear localization signal" evidence="1">
    <location>
        <begin position="434"/>
        <end position="441"/>
    </location>
</feature>
<evidence type="ECO:0000255" key="1"/>
<evidence type="ECO:0000305" key="2"/>
<protein>
    <recommendedName>
        <fullName>Uncharacterized protein CTHT_0071780</fullName>
    </recommendedName>
</protein>
<comment type="subcellular location">
    <subcellularLocation>
        <location evidence="2">Nucleus</location>
    </subcellularLocation>
</comment>
<reference key="1">
    <citation type="journal article" date="2011" name="Cell">
        <title>Insight into structure and assembly of the nuclear pore complex by utilizing the genome of a eukaryotic thermophile.</title>
        <authorList>
            <person name="Amlacher S."/>
            <person name="Sarges P."/>
            <person name="Flemming D."/>
            <person name="van Noort V."/>
            <person name="Kunze R."/>
            <person name="Devos D.P."/>
            <person name="Arumugam M."/>
            <person name="Bork P."/>
            <person name="Hurt E."/>
        </authorList>
    </citation>
    <scope>NUCLEOTIDE SEQUENCE [LARGE SCALE GENOMIC DNA]</scope>
    <source>
        <strain>DSM 1495 / CBS 144.50 / IMI 039719</strain>
    </source>
</reference>
<organism>
    <name type="scientific">Chaetomium thermophilum (strain DSM 1495 / CBS 144.50 / IMI 039719)</name>
    <name type="common">Thermochaetoides thermophila</name>
    <dbReference type="NCBI Taxonomy" id="759272"/>
    <lineage>
        <taxon>Eukaryota</taxon>
        <taxon>Fungi</taxon>
        <taxon>Dikarya</taxon>
        <taxon>Ascomycota</taxon>
        <taxon>Pezizomycotina</taxon>
        <taxon>Sordariomycetes</taxon>
        <taxon>Sordariomycetidae</taxon>
        <taxon>Sordariales</taxon>
        <taxon>Chaetomiaceae</taxon>
        <taxon>Thermochaetoides</taxon>
    </lineage>
</organism>
<keyword id="KW-0002">3D-structure</keyword>
<keyword id="KW-0539">Nucleus</keyword>
<keyword id="KW-1185">Reference proteome</keyword>
<sequence length="930" mass="102299">MAAKLQIHAPYVLHALPRPLDRSDGLGRYFSGEVFGQKQGGKRKKRTELAVAIDGVAVYLYDILSSQVVTSYLVSPQSCFTCPPSSLRWRPASSKTVTRYTYVSVATGDSVLAKREIRLFREETLSTGNTVVACISRTICSDSPIVHIFTSSPRNFLTNVPGKDIPNHDLIIITANGSIFALNGETLEEKWQVSPSVLSREILSDSKLALQVDFVQQTSAADVADGLFGGKNDLFGVFQERIHRDGFNPDFFVVITSQSGADSANARHLHVLALPSEREARQTGKENVISVFVAPLAVEETCRSFQLDVRSGTLQAISNKALVTYQFANGIAKLENRLQVPGLSSYLRLSKTSVLTSATDSLSVYNPIYRSLQAAARLEPTDDTNGHACEFVSYLASRELAVAIRGGSLVVIQIEAPKNRTAKRRAEGLLTDAIRRGISRKIAFEKRTKPEHVSDSTILADAVPGSLSDPSWSEWQNKAMQADELLQNNDIQSWEELMAEVFKVPIKPDETADAEKQTAPNPVVKLPEWEWPSSRSDYARVDRRWVVYAINKVFGWEGQLESNTGRLTCRLPESSVLIYLVDAGHLSTSNVKSAFKDDVREVDKVEELIGEQLPIILAEVDPTMELLVGYLSGTQLGSSELVSSIKLLLCSLGLFEDGSRLPAVGDNTHIEQVTGQENEVVNMELDRAEEELQITEHYLDEHRTRGLGIAFSKLAACPAAETVKSLRRLFKPDEVLVLLNVLRAELIKDGWTTRYLDKINADQEDDAPPDASIQLIADLMSRCIDAVGLSGWMAADVMLSSSRTHQDSANFFSQFQAEISVALEGVMEAVRLKGVIAEAANYAKRARRALADSAKGKAMTVHMSAELPLGLKTDNKISTERVRSGGEIVARSSRQIGHFISKRRGIYSIHRISEEMLLGAAGPTVVQEAR</sequence>
<proteinExistence type="evidence at protein level"/>
<name>Y1780_CHATD</name>